<reference key="1">
    <citation type="submission" date="2007-07" db="EMBL/GenBank/DDBJ databases">
        <title>Complete sequence of chromosome of Xanthobacter autotrophicus Py2.</title>
        <authorList>
            <consortium name="US DOE Joint Genome Institute"/>
            <person name="Copeland A."/>
            <person name="Lucas S."/>
            <person name="Lapidus A."/>
            <person name="Barry K."/>
            <person name="Glavina del Rio T."/>
            <person name="Hammon N."/>
            <person name="Israni S."/>
            <person name="Dalin E."/>
            <person name="Tice H."/>
            <person name="Pitluck S."/>
            <person name="Sims D."/>
            <person name="Brettin T."/>
            <person name="Bruce D."/>
            <person name="Detter J.C."/>
            <person name="Han C."/>
            <person name="Tapia R."/>
            <person name="Brainard J."/>
            <person name="Schmutz J."/>
            <person name="Larimer F."/>
            <person name="Land M."/>
            <person name="Hauser L."/>
            <person name="Kyrpides N."/>
            <person name="Kim E."/>
            <person name="Ensigns S.A."/>
            <person name="Richardson P."/>
        </authorList>
    </citation>
    <scope>NUCLEOTIDE SEQUENCE [LARGE SCALE GENOMIC DNA]</scope>
    <source>
        <strain>ATCC BAA-1158 / Py2</strain>
    </source>
</reference>
<proteinExistence type="inferred from homology"/>
<keyword id="KW-0456">Lyase</keyword>
<keyword id="KW-1185">Reference proteome</keyword>
<comment type="catalytic activity">
    <reaction evidence="1">
        <text>5-dehydro-4-deoxy-D-glucarate + H(+) = 2,5-dioxopentanoate + CO2 + H2O</text>
        <dbReference type="Rhea" id="RHEA:24608"/>
        <dbReference type="ChEBI" id="CHEBI:15377"/>
        <dbReference type="ChEBI" id="CHEBI:15378"/>
        <dbReference type="ChEBI" id="CHEBI:16526"/>
        <dbReference type="ChEBI" id="CHEBI:42819"/>
        <dbReference type="ChEBI" id="CHEBI:58136"/>
        <dbReference type="EC" id="4.2.1.41"/>
    </reaction>
</comment>
<comment type="pathway">
    <text evidence="1">Carbohydrate acid metabolism; D-glucarate degradation; 2,5-dioxopentanoate from D-glucarate: step 2/2.</text>
</comment>
<comment type="similarity">
    <text evidence="1">Belongs to the DapA family.</text>
</comment>
<gene>
    <name type="ordered locus">Xaut_3371</name>
</gene>
<sequence length="301" mass="32035">MNPQDIKTALGSGLLSFPVTHFHADGRFNAESYKQHIEWLAGYDAPVLFAAGGTGEFFSLAPSEIPGIVSAAKEAAGKTAIVAGCGFGSVVGVEIAKAAEKAGADGLLLLPHYLIDAPQEGLYALVKQICDAVGIGVMVYNRDNSVLGVETLARLCDACPNLVGFKDGTGQIGLVRQITATMGDRLIYLGGMPTAELFAEAYLGAGFTTYSSAVFNFVPGLAVEFYRALRAGDRPTCERLLRDFFYPFMAIRNRRKGYAVAAIKAGVRLQGFAAGPVRAPLDDLTIEEEAMLDALIGTWKR</sequence>
<feature type="chain" id="PRO_1000132276" description="Probable 5-dehydro-4-deoxyglucarate dehydratase">
    <location>
        <begin position="1"/>
        <end position="301"/>
    </location>
</feature>
<name>KDGD_XANP2</name>
<organism>
    <name type="scientific">Xanthobacter autotrophicus (strain ATCC BAA-1158 / Py2)</name>
    <dbReference type="NCBI Taxonomy" id="78245"/>
    <lineage>
        <taxon>Bacteria</taxon>
        <taxon>Pseudomonadati</taxon>
        <taxon>Pseudomonadota</taxon>
        <taxon>Alphaproteobacteria</taxon>
        <taxon>Hyphomicrobiales</taxon>
        <taxon>Xanthobacteraceae</taxon>
        <taxon>Xanthobacter</taxon>
    </lineage>
</organism>
<evidence type="ECO:0000255" key="1">
    <source>
        <dbReference type="HAMAP-Rule" id="MF_00694"/>
    </source>
</evidence>
<accession>A7IKQ7</accession>
<protein>
    <recommendedName>
        <fullName evidence="1">Probable 5-dehydro-4-deoxyglucarate dehydratase</fullName>
        <ecNumber evidence="1">4.2.1.41</ecNumber>
    </recommendedName>
    <alternativeName>
        <fullName evidence="1">5-keto-4-deoxy-glucarate dehydratase</fullName>
        <shortName evidence="1">KDGDH</shortName>
    </alternativeName>
</protein>
<dbReference type="EC" id="4.2.1.41" evidence="1"/>
<dbReference type="EMBL" id="CP000781">
    <property type="protein sequence ID" value="ABS68600.1"/>
    <property type="molecule type" value="Genomic_DNA"/>
</dbReference>
<dbReference type="SMR" id="A7IKQ7"/>
<dbReference type="STRING" id="78245.Xaut_3371"/>
<dbReference type="KEGG" id="xau:Xaut_3371"/>
<dbReference type="eggNOG" id="COG0329">
    <property type="taxonomic scope" value="Bacteria"/>
</dbReference>
<dbReference type="HOGENOM" id="CLU_049343_5_2_5"/>
<dbReference type="OrthoDB" id="8995637at2"/>
<dbReference type="PhylomeDB" id="A7IKQ7"/>
<dbReference type="UniPathway" id="UPA00564">
    <property type="reaction ID" value="UER00628"/>
</dbReference>
<dbReference type="Proteomes" id="UP000002417">
    <property type="component" value="Chromosome"/>
</dbReference>
<dbReference type="GO" id="GO:0008840">
    <property type="term" value="F:4-hydroxy-tetrahydrodipicolinate synthase activity"/>
    <property type="evidence" value="ECO:0007669"/>
    <property type="project" value="TreeGrafter"/>
</dbReference>
<dbReference type="GO" id="GO:0047448">
    <property type="term" value="F:5-dehydro-4-deoxyglucarate dehydratase activity"/>
    <property type="evidence" value="ECO:0007669"/>
    <property type="project" value="UniProtKB-UniRule"/>
</dbReference>
<dbReference type="GO" id="GO:0042838">
    <property type="term" value="P:D-glucarate catabolic process"/>
    <property type="evidence" value="ECO:0007669"/>
    <property type="project" value="UniProtKB-UniRule"/>
</dbReference>
<dbReference type="CDD" id="cd00951">
    <property type="entry name" value="KDGDH"/>
    <property type="match status" value="1"/>
</dbReference>
<dbReference type="Gene3D" id="3.20.20.70">
    <property type="entry name" value="Aldolase class I"/>
    <property type="match status" value="1"/>
</dbReference>
<dbReference type="HAMAP" id="MF_00694">
    <property type="entry name" value="KDGDH"/>
    <property type="match status" value="1"/>
</dbReference>
<dbReference type="InterPro" id="IPR013785">
    <property type="entry name" value="Aldolase_TIM"/>
</dbReference>
<dbReference type="InterPro" id="IPR002220">
    <property type="entry name" value="DapA-like"/>
</dbReference>
<dbReference type="InterPro" id="IPR017655">
    <property type="entry name" value="Dehydro-deoxyglucarate_dehyd"/>
</dbReference>
<dbReference type="NCBIfam" id="TIGR03249">
    <property type="entry name" value="KdgD"/>
    <property type="match status" value="1"/>
</dbReference>
<dbReference type="NCBIfam" id="NF002958">
    <property type="entry name" value="PRK03620.1"/>
    <property type="match status" value="1"/>
</dbReference>
<dbReference type="PANTHER" id="PTHR12128:SF19">
    <property type="entry name" value="5-DEHYDRO-4-DEOXYGLUCARATE DEHYDRATASE 2-RELATED"/>
    <property type="match status" value="1"/>
</dbReference>
<dbReference type="PANTHER" id="PTHR12128">
    <property type="entry name" value="DIHYDRODIPICOLINATE SYNTHASE"/>
    <property type="match status" value="1"/>
</dbReference>
<dbReference type="Pfam" id="PF00701">
    <property type="entry name" value="DHDPS"/>
    <property type="match status" value="1"/>
</dbReference>
<dbReference type="PIRSF" id="PIRSF001365">
    <property type="entry name" value="DHDPS"/>
    <property type="match status" value="1"/>
</dbReference>
<dbReference type="SMART" id="SM01130">
    <property type="entry name" value="DHDPS"/>
    <property type="match status" value="1"/>
</dbReference>
<dbReference type="SUPFAM" id="SSF51569">
    <property type="entry name" value="Aldolase"/>
    <property type="match status" value="1"/>
</dbReference>